<gene>
    <name evidence="1" type="primary">rimP</name>
    <name type="ordered locus">GDI1362</name>
    <name type="ordered locus">Gdia_2067</name>
</gene>
<name>RIMP_GLUDA</name>
<comment type="function">
    <text evidence="1">Required for maturation of 30S ribosomal subunits.</text>
</comment>
<comment type="subcellular location">
    <subcellularLocation>
        <location evidence="1">Cytoplasm</location>
    </subcellularLocation>
</comment>
<comment type="similarity">
    <text evidence="1">Belongs to the RimP family.</text>
</comment>
<comment type="sequence caution" evidence="3">
    <conflict type="erroneous initiation">
        <sequence resource="EMBL-CDS" id="CAP55305"/>
    </conflict>
</comment>
<organism>
    <name type="scientific">Gluconacetobacter diazotrophicus (strain ATCC 49037 / DSM 5601 / CCUG 37298 / CIP 103539 / LMG 7603 / PAl5)</name>
    <dbReference type="NCBI Taxonomy" id="272568"/>
    <lineage>
        <taxon>Bacteria</taxon>
        <taxon>Pseudomonadati</taxon>
        <taxon>Pseudomonadota</taxon>
        <taxon>Alphaproteobacteria</taxon>
        <taxon>Acetobacterales</taxon>
        <taxon>Acetobacteraceae</taxon>
        <taxon>Gluconacetobacter</taxon>
    </lineage>
</organism>
<accession>A9HF10</accession>
<accession>B5ZDJ7</accession>
<proteinExistence type="inferred from homology"/>
<feature type="chain" id="PRO_0000384675" description="Ribosome maturation factor RimP">
    <location>
        <begin position="1"/>
        <end position="207"/>
    </location>
</feature>
<feature type="region of interest" description="Disordered" evidence="2">
    <location>
        <begin position="171"/>
        <end position="207"/>
    </location>
</feature>
<feature type="compositionally biased region" description="Basic residues" evidence="2">
    <location>
        <begin position="197"/>
        <end position="207"/>
    </location>
</feature>
<evidence type="ECO:0000255" key="1">
    <source>
        <dbReference type="HAMAP-Rule" id="MF_01077"/>
    </source>
</evidence>
<evidence type="ECO:0000256" key="2">
    <source>
        <dbReference type="SAM" id="MobiDB-lite"/>
    </source>
</evidence>
<evidence type="ECO:0000305" key="3"/>
<dbReference type="EMBL" id="AM889285">
    <property type="protein sequence ID" value="CAP55305.1"/>
    <property type="status" value="ALT_INIT"/>
    <property type="molecule type" value="Genomic_DNA"/>
</dbReference>
<dbReference type="EMBL" id="CP001189">
    <property type="protein sequence ID" value="ACI51827.1"/>
    <property type="molecule type" value="Genomic_DNA"/>
</dbReference>
<dbReference type="RefSeq" id="WP_012554124.1">
    <property type="nucleotide sequence ID" value="NC_010125.1"/>
</dbReference>
<dbReference type="SMR" id="A9HF10"/>
<dbReference type="STRING" id="272568.GDI1362"/>
<dbReference type="KEGG" id="gdi:GDI1362"/>
<dbReference type="KEGG" id="gdj:Gdia_2067"/>
<dbReference type="eggNOG" id="COG0779">
    <property type="taxonomic scope" value="Bacteria"/>
</dbReference>
<dbReference type="HOGENOM" id="CLU_070525_0_1_5"/>
<dbReference type="OrthoDB" id="9805006at2"/>
<dbReference type="Proteomes" id="UP000001176">
    <property type="component" value="Chromosome"/>
</dbReference>
<dbReference type="GO" id="GO:0005829">
    <property type="term" value="C:cytosol"/>
    <property type="evidence" value="ECO:0007669"/>
    <property type="project" value="TreeGrafter"/>
</dbReference>
<dbReference type="GO" id="GO:0000028">
    <property type="term" value="P:ribosomal small subunit assembly"/>
    <property type="evidence" value="ECO:0007669"/>
    <property type="project" value="TreeGrafter"/>
</dbReference>
<dbReference type="GO" id="GO:0006412">
    <property type="term" value="P:translation"/>
    <property type="evidence" value="ECO:0007669"/>
    <property type="project" value="TreeGrafter"/>
</dbReference>
<dbReference type="CDD" id="cd01734">
    <property type="entry name" value="YlxS_C"/>
    <property type="match status" value="1"/>
</dbReference>
<dbReference type="Gene3D" id="2.30.30.180">
    <property type="entry name" value="Ribosome maturation factor RimP, C-terminal domain"/>
    <property type="match status" value="1"/>
</dbReference>
<dbReference type="Gene3D" id="3.30.300.70">
    <property type="entry name" value="RimP-like superfamily, N-terminal"/>
    <property type="match status" value="1"/>
</dbReference>
<dbReference type="HAMAP" id="MF_01077">
    <property type="entry name" value="RimP"/>
    <property type="match status" value="1"/>
</dbReference>
<dbReference type="InterPro" id="IPR003728">
    <property type="entry name" value="Ribosome_maturation_RimP"/>
</dbReference>
<dbReference type="InterPro" id="IPR028998">
    <property type="entry name" value="RimP_C"/>
</dbReference>
<dbReference type="InterPro" id="IPR036847">
    <property type="entry name" value="RimP_C_sf"/>
</dbReference>
<dbReference type="InterPro" id="IPR028989">
    <property type="entry name" value="RimP_N"/>
</dbReference>
<dbReference type="InterPro" id="IPR035956">
    <property type="entry name" value="RimP_N_sf"/>
</dbReference>
<dbReference type="NCBIfam" id="NF000932">
    <property type="entry name" value="PRK00092.2-5"/>
    <property type="match status" value="1"/>
</dbReference>
<dbReference type="PANTHER" id="PTHR33867">
    <property type="entry name" value="RIBOSOME MATURATION FACTOR RIMP"/>
    <property type="match status" value="1"/>
</dbReference>
<dbReference type="PANTHER" id="PTHR33867:SF1">
    <property type="entry name" value="RIBOSOME MATURATION FACTOR RIMP"/>
    <property type="match status" value="1"/>
</dbReference>
<dbReference type="Pfam" id="PF17384">
    <property type="entry name" value="DUF150_C"/>
    <property type="match status" value="1"/>
</dbReference>
<dbReference type="Pfam" id="PF02576">
    <property type="entry name" value="RimP_N"/>
    <property type="match status" value="1"/>
</dbReference>
<dbReference type="SUPFAM" id="SSF74942">
    <property type="entry name" value="YhbC-like, C-terminal domain"/>
    <property type="match status" value="1"/>
</dbReference>
<dbReference type="SUPFAM" id="SSF75420">
    <property type="entry name" value="YhbC-like, N-terminal domain"/>
    <property type="match status" value="1"/>
</dbReference>
<keyword id="KW-0963">Cytoplasm</keyword>
<keyword id="KW-1185">Reference proteome</keyword>
<keyword id="KW-0690">Ribosome biogenesis</keyword>
<sequence length="207" mass="22007">MDADLPYLTGLDAKVAAIVAPVLADMGFELVRVAILGRESPTVQIMADRADGTLIAIEDCEQISHAVGAVLDVEDPLPGAWTLEVSSAGIDRPLTRAKDWTRFAGHLAKAEVNIPIDGRKRFSGILLGAEDGFGRLRLEDGTEVALPLSDMRRARLVLTDELIAASAHMMRAPGGAPEEGEEDTTEAAPEGAGKSPKPGRRPARKTH</sequence>
<reference key="1">
    <citation type="journal article" date="2009" name="BMC Genomics">
        <title>Complete genome sequence of the sugarcane nitrogen-fixing endophyte Gluconacetobacter diazotrophicus Pal5.</title>
        <authorList>
            <person name="Bertalan M."/>
            <person name="Albano R."/>
            <person name="de Padua V."/>
            <person name="Rouws L."/>
            <person name="Rojas C."/>
            <person name="Hemerly A."/>
            <person name="Teixeira K."/>
            <person name="Schwab S."/>
            <person name="Araujo J."/>
            <person name="Oliveira A."/>
            <person name="Franca L."/>
            <person name="Magalhaes V."/>
            <person name="Alqueres S."/>
            <person name="Cardoso A."/>
            <person name="Almeida W."/>
            <person name="Loureiro M.M."/>
            <person name="Nogueira E."/>
            <person name="Cidade D."/>
            <person name="Oliveira D."/>
            <person name="Simao T."/>
            <person name="Macedo J."/>
            <person name="Valadao A."/>
            <person name="Dreschsel M."/>
            <person name="Freitas F."/>
            <person name="Vidal M."/>
            <person name="Guedes H."/>
            <person name="Rodrigues E."/>
            <person name="Meneses C."/>
            <person name="Brioso P."/>
            <person name="Pozzer L."/>
            <person name="Figueiredo D."/>
            <person name="Montano H."/>
            <person name="Junior J."/>
            <person name="de Souza Filho G."/>
            <person name="Martin Quintana Flores V."/>
            <person name="Ferreira B."/>
            <person name="Branco A."/>
            <person name="Gonzalez P."/>
            <person name="Guillobel H."/>
            <person name="Lemos M."/>
            <person name="Seibel L."/>
            <person name="Macedo J."/>
            <person name="Alves-Ferreira M."/>
            <person name="Sachetto-Martins G."/>
            <person name="Coelho A."/>
            <person name="Santos E."/>
            <person name="Amaral G."/>
            <person name="Neves A."/>
            <person name="Pacheco A.B."/>
            <person name="Carvalho D."/>
            <person name="Lery L."/>
            <person name="Bisch P."/>
            <person name="Rossle S.C."/>
            <person name="Urmenyi T."/>
            <person name="Rael Pereira A."/>
            <person name="Silva R."/>
            <person name="Rondinelli E."/>
            <person name="von Kruger W."/>
            <person name="Martins O."/>
            <person name="Baldani J.I."/>
            <person name="Ferreira P.C."/>
        </authorList>
    </citation>
    <scope>NUCLEOTIDE SEQUENCE [LARGE SCALE GENOMIC DNA]</scope>
    <source>
        <strain>ATCC 49037 / DSM 5601 / CCUG 37298 / CIP 103539 / LMG 7603 / PAl5</strain>
    </source>
</reference>
<reference key="2">
    <citation type="journal article" date="2010" name="Stand. Genomic Sci.">
        <title>Two genome sequences of the same bacterial strain, Gluconacetobacter diazotrophicus PAl 5, suggest a new standard in genome sequence submission.</title>
        <authorList>
            <person name="Giongo A."/>
            <person name="Tyler H.L."/>
            <person name="Zipperer U.N."/>
            <person name="Triplett E.W."/>
        </authorList>
    </citation>
    <scope>NUCLEOTIDE SEQUENCE [LARGE SCALE GENOMIC DNA]</scope>
    <source>
        <strain>ATCC 49037 / DSM 5601 / CCUG 37298 / CIP 103539 / LMG 7603 / PAl5</strain>
    </source>
</reference>
<protein>
    <recommendedName>
        <fullName evidence="1">Ribosome maturation factor RimP</fullName>
    </recommendedName>
</protein>